<evidence type="ECO:0000255" key="1">
    <source>
        <dbReference type="HAMAP-Rule" id="MF_01006"/>
    </source>
</evidence>
<protein>
    <recommendedName>
        <fullName evidence="1">Undecaprenyl-diphosphatase</fullName>
        <ecNumber evidence="1">3.6.1.27</ecNumber>
    </recommendedName>
    <alternativeName>
        <fullName evidence="1">Bacitracin resistance protein</fullName>
    </alternativeName>
    <alternativeName>
        <fullName evidence="1">Undecaprenyl pyrophosphate phosphatase</fullName>
    </alternativeName>
</protein>
<accession>Q1IPW7</accession>
<organism>
    <name type="scientific">Koribacter versatilis (strain Ellin345)</name>
    <dbReference type="NCBI Taxonomy" id="204669"/>
    <lineage>
        <taxon>Bacteria</taxon>
        <taxon>Pseudomonadati</taxon>
        <taxon>Acidobacteriota</taxon>
        <taxon>Terriglobia</taxon>
        <taxon>Terriglobales</taxon>
        <taxon>Candidatus Korobacteraceae</taxon>
        <taxon>Candidatus Korobacter</taxon>
    </lineage>
</organism>
<feature type="chain" id="PRO_0000290674" description="Undecaprenyl-diphosphatase">
    <location>
        <begin position="1"/>
        <end position="286"/>
    </location>
</feature>
<feature type="transmembrane region" description="Helical" evidence="1">
    <location>
        <begin position="43"/>
        <end position="63"/>
    </location>
</feature>
<feature type="transmembrane region" description="Helical" evidence="1">
    <location>
        <begin position="91"/>
        <end position="111"/>
    </location>
</feature>
<feature type="transmembrane region" description="Helical" evidence="1">
    <location>
        <begin position="118"/>
        <end position="138"/>
    </location>
</feature>
<feature type="transmembrane region" description="Helical" evidence="1">
    <location>
        <begin position="150"/>
        <end position="170"/>
    </location>
</feature>
<feature type="transmembrane region" description="Helical" evidence="1">
    <location>
        <begin position="189"/>
        <end position="209"/>
    </location>
</feature>
<feature type="transmembrane region" description="Helical" evidence="1">
    <location>
        <begin position="236"/>
        <end position="256"/>
    </location>
</feature>
<feature type="transmembrane region" description="Helical" evidence="1">
    <location>
        <begin position="264"/>
        <end position="284"/>
    </location>
</feature>
<proteinExistence type="inferred from homology"/>
<sequence length="286" mass="31183">MNAYLLAALLGVVEGLTEFLPVSSTAHLRICEALLHIDLGDGFWKMFSIVIQLGAILCLPIYFRARISEFFATFPKGKSGNHTALTHPLTLTIIAFLCTAIPAFLFTKIIGKHLESVIIMGSALLIGGIVMWIVDVMFADKGATDDMDKMSVGQAIWIGLCQVLSAVFPGTSRSMSTIAAGQLSGMTRAAALEFSFFLSIPTMVVATCYDLLKTLRHKDEAGAALGVVHMDAHAWITLAIGFIVSFIVAYFVVAWFMKWVRTRGFVPFAVYRIVVGIAVLAWALKR</sequence>
<keyword id="KW-0046">Antibiotic resistance</keyword>
<keyword id="KW-0997">Cell inner membrane</keyword>
<keyword id="KW-1003">Cell membrane</keyword>
<keyword id="KW-0133">Cell shape</keyword>
<keyword id="KW-0961">Cell wall biogenesis/degradation</keyword>
<keyword id="KW-0378">Hydrolase</keyword>
<keyword id="KW-0472">Membrane</keyword>
<keyword id="KW-0573">Peptidoglycan synthesis</keyword>
<keyword id="KW-1185">Reference proteome</keyword>
<keyword id="KW-0812">Transmembrane</keyword>
<keyword id="KW-1133">Transmembrane helix</keyword>
<reference key="1">
    <citation type="journal article" date="2009" name="Appl. Environ. Microbiol.">
        <title>Three genomes from the phylum Acidobacteria provide insight into the lifestyles of these microorganisms in soils.</title>
        <authorList>
            <person name="Ward N.L."/>
            <person name="Challacombe J.F."/>
            <person name="Janssen P.H."/>
            <person name="Henrissat B."/>
            <person name="Coutinho P.M."/>
            <person name="Wu M."/>
            <person name="Xie G."/>
            <person name="Haft D.H."/>
            <person name="Sait M."/>
            <person name="Badger J."/>
            <person name="Barabote R.D."/>
            <person name="Bradley B."/>
            <person name="Brettin T.S."/>
            <person name="Brinkac L.M."/>
            <person name="Bruce D."/>
            <person name="Creasy T."/>
            <person name="Daugherty S.C."/>
            <person name="Davidsen T.M."/>
            <person name="DeBoy R.T."/>
            <person name="Detter J.C."/>
            <person name="Dodson R.J."/>
            <person name="Durkin A.S."/>
            <person name="Ganapathy A."/>
            <person name="Gwinn-Giglio M."/>
            <person name="Han C.S."/>
            <person name="Khouri H."/>
            <person name="Kiss H."/>
            <person name="Kothari S.P."/>
            <person name="Madupu R."/>
            <person name="Nelson K.E."/>
            <person name="Nelson W.C."/>
            <person name="Paulsen I."/>
            <person name="Penn K."/>
            <person name="Ren Q."/>
            <person name="Rosovitz M.J."/>
            <person name="Selengut J.D."/>
            <person name="Shrivastava S."/>
            <person name="Sullivan S.A."/>
            <person name="Tapia R."/>
            <person name="Thompson L.S."/>
            <person name="Watkins K.L."/>
            <person name="Yang Q."/>
            <person name="Yu C."/>
            <person name="Zafar N."/>
            <person name="Zhou L."/>
            <person name="Kuske C.R."/>
        </authorList>
    </citation>
    <scope>NUCLEOTIDE SEQUENCE [LARGE SCALE GENOMIC DNA]</scope>
    <source>
        <strain>Ellin345</strain>
    </source>
</reference>
<name>UPPP_KORVE</name>
<gene>
    <name evidence="1" type="primary">uppP</name>
    <name type="ordered locus">Acid345_2082</name>
</gene>
<comment type="function">
    <text evidence="1">Catalyzes the dephosphorylation of undecaprenyl diphosphate (UPP). Confers resistance to bacitracin.</text>
</comment>
<comment type="catalytic activity">
    <reaction evidence="1">
        <text>di-trans,octa-cis-undecaprenyl diphosphate + H2O = di-trans,octa-cis-undecaprenyl phosphate + phosphate + H(+)</text>
        <dbReference type="Rhea" id="RHEA:28094"/>
        <dbReference type="ChEBI" id="CHEBI:15377"/>
        <dbReference type="ChEBI" id="CHEBI:15378"/>
        <dbReference type="ChEBI" id="CHEBI:43474"/>
        <dbReference type="ChEBI" id="CHEBI:58405"/>
        <dbReference type="ChEBI" id="CHEBI:60392"/>
        <dbReference type="EC" id="3.6.1.27"/>
    </reaction>
</comment>
<comment type="subcellular location">
    <subcellularLocation>
        <location evidence="1">Cell inner membrane</location>
        <topology evidence="1">Multi-pass membrane protein</topology>
    </subcellularLocation>
</comment>
<comment type="miscellaneous">
    <text>Bacitracin is thought to be involved in the inhibition of peptidoglycan synthesis by sequestering undecaprenyl diphosphate, thereby reducing the pool of lipid carrier available.</text>
</comment>
<comment type="similarity">
    <text evidence="1">Belongs to the UppP family.</text>
</comment>
<dbReference type="EC" id="3.6.1.27" evidence="1"/>
<dbReference type="EMBL" id="CP000360">
    <property type="protein sequence ID" value="ABF41083.1"/>
    <property type="molecule type" value="Genomic_DNA"/>
</dbReference>
<dbReference type="RefSeq" id="WP_011522884.1">
    <property type="nucleotide sequence ID" value="NC_008009.1"/>
</dbReference>
<dbReference type="SMR" id="Q1IPW7"/>
<dbReference type="STRING" id="204669.Acid345_2082"/>
<dbReference type="EnsemblBacteria" id="ABF41083">
    <property type="protein sequence ID" value="ABF41083"/>
    <property type="gene ID" value="Acid345_2082"/>
</dbReference>
<dbReference type="KEGG" id="aba:Acid345_2082"/>
<dbReference type="eggNOG" id="COG1968">
    <property type="taxonomic scope" value="Bacteria"/>
</dbReference>
<dbReference type="HOGENOM" id="CLU_060296_2_0_0"/>
<dbReference type="OrthoDB" id="9808289at2"/>
<dbReference type="Proteomes" id="UP000002432">
    <property type="component" value="Chromosome"/>
</dbReference>
<dbReference type="GO" id="GO:0005886">
    <property type="term" value="C:plasma membrane"/>
    <property type="evidence" value="ECO:0007669"/>
    <property type="project" value="UniProtKB-SubCell"/>
</dbReference>
<dbReference type="GO" id="GO:0050380">
    <property type="term" value="F:undecaprenyl-diphosphatase activity"/>
    <property type="evidence" value="ECO:0007669"/>
    <property type="project" value="UniProtKB-UniRule"/>
</dbReference>
<dbReference type="GO" id="GO:0071555">
    <property type="term" value="P:cell wall organization"/>
    <property type="evidence" value="ECO:0007669"/>
    <property type="project" value="UniProtKB-KW"/>
</dbReference>
<dbReference type="GO" id="GO:0009252">
    <property type="term" value="P:peptidoglycan biosynthetic process"/>
    <property type="evidence" value="ECO:0007669"/>
    <property type="project" value="UniProtKB-KW"/>
</dbReference>
<dbReference type="GO" id="GO:0008360">
    <property type="term" value="P:regulation of cell shape"/>
    <property type="evidence" value="ECO:0007669"/>
    <property type="project" value="UniProtKB-KW"/>
</dbReference>
<dbReference type="GO" id="GO:0046677">
    <property type="term" value="P:response to antibiotic"/>
    <property type="evidence" value="ECO:0007669"/>
    <property type="project" value="UniProtKB-UniRule"/>
</dbReference>
<dbReference type="HAMAP" id="MF_01006">
    <property type="entry name" value="Undec_diphosphatase"/>
    <property type="match status" value="1"/>
</dbReference>
<dbReference type="InterPro" id="IPR003824">
    <property type="entry name" value="UppP"/>
</dbReference>
<dbReference type="PANTHER" id="PTHR30622">
    <property type="entry name" value="UNDECAPRENYL-DIPHOSPHATASE"/>
    <property type="match status" value="1"/>
</dbReference>
<dbReference type="PANTHER" id="PTHR30622:SF3">
    <property type="entry name" value="UNDECAPRENYL-DIPHOSPHATASE"/>
    <property type="match status" value="1"/>
</dbReference>
<dbReference type="Pfam" id="PF02673">
    <property type="entry name" value="BacA"/>
    <property type="match status" value="1"/>
</dbReference>